<reference key="1">
    <citation type="submission" date="2008-05" db="EMBL/GenBank/DDBJ databases">
        <title>Complete sequence of chromosome 1 of Ralstonia pickettii 12J.</title>
        <authorList>
            <person name="Lucas S."/>
            <person name="Copeland A."/>
            <person name="Lapidus A."/>
            <person name="Glavina del Rio T."/>
            <person name="Dalin E."/>
            <person name="Tice H."/>
            <person name="Bruce D."/>
            <person name="Goodwin L."/>
            <person name="Pitluck S."/>
            <person name="Meincke L."/>
            <person name="Brettin T."/>
            <person name="Detter J.C."/>
            <person name="Han C."/>
            <person name="Kuske C.R."/>
            <person name="Schmutz J."/>
            <person name="Larimer F."/>
            <person name="Land M."/>
            <person name="Hauser L."/>
            <person name="Kyrpides N."/>
            <person name="Mikhailova N."/>
            <person name="Marsh T."/>
            <person name="Richardson P."/>
        </authorList>
    </citation>
    <scope>NUCLEOTIDE SEQUENCE [LARGE SCALE GENOMIC DNA]</scope>
    <source>
        <strain>12J</strain>
    </source>
</reference>
<dbReference type="EC" id="1.9.6.1" evidence="1"/>
<dbReference type="EMBL" id="CP001068">
    <property type="protein sequence ID" value="ACD27967.1"/>
    <property type="molecule type" value="Genomic_DNA"/>
</dbReference>
<dbReference type="SMR" id="B2UBL7"/>
<dbReference type="STRING" id="402626.Rpic_2844"/>
<dbReference type="KEGG" id="rpi:Rpic_2844"/>
<dbReference type="PATRIC" id="fig|402626.5.peg.3982"/>
<dbReference type="eggNOG" id="COG0243">
    <property type="taxonomic scope" value="Bacteria"/>
</dbReference>
<dbReference type="HOGENOM" id="CLU_000422_13_4_4"/>
<dbReference type="GO" id="GO:0016020">
    <property type="term" value="C:membrane"/>
    <property type="evidence" value="ECO:0007669"/>
    <property type="project" value="TreeGrafter"/>
</dbReference>
<dbReference type="GO" id="GO:0009325">
    <property type="term" value="C:nitrate reductase complex"/>
    <property type="evidence" value="ECO:0007669"/>
    <property type="project" value="TreeGrafter"/>
</dbReference>
<dbReference type="GO" id="GO:0042597">
    <property type="term" value="C:periplasmic space"/>
    <property type="evidence" value="ECO:0007669"/>
    <property type="project" value="UniProtKB-SubCell"/>
</dbReference>
<dbReference type="GO" id="GO:0051539">
    <property type="term" value="F:4 iron, 4 sulfur cluster binding"/>
    <property type="evidence" value="ECO:0007669"/>
    <property type="project" value="UniProtKB-KW"/>
</dbReference>
<dbReference type="GO" id="GO:0009055">
    <property type="term" value="F:electron transfer activity"/>
    <property type="evidence" value="ECO:0007669"/>
    <property type="project" value="UniProtKB-UniRule"/>
</dbReference>
<dbReference type="GO" id="GO:0005506">
    <property type="term" value="F:iron ion binding"/>
    <property type="evidence" value="ECO:0007669"/>
    <property type="project" value="UniProtKB-UniRule"/>
</dbReference>
<dbReference type="GO" id="GO:0030151">
    <property type="term" value="F:molybdenum ion binding"/>
    <property type="evidence" value="ECO:0007669"/>
    <property type="project" value="InterPro"/>
</dbReference>
<dbReference type="GO" id="GO:0043546">
    <property type="term" value="F:molybdopterin cofactor binding"/>
    <property type="evidence" value="ECO:0007669"/>
    <property type="project" value="InterPro"/>
</dbReference>
<dbReference type="GO" id="GO:0050140">
    <property type="term" value="F:nitrate reductase (cytochrome) activity"/>
    <property type="evidence" value="ECO:0007669"/>
    <property type="project" value="UniProtKB-EC"/>
</dbReference>
<dbReference type="GO" id="GO:0045333">
    <property type="term" value="P:cellular respiration"/>
    <property type="evidence" value="ECO:0007669"/>
    <property type="project" value="UniProtKB-ARBA"/>
</dbReference>
<dbReference type="GO" id="GO:0006777">
    <property type="term" value="P:Mo-molybdopterin cofactor biosynthetic process"/>
    <property type="evidence" value="ECO:0007669"/>
    <property type="project" value="UniProtKB-UniRule"/>
</dbReference>
<dbReference type="GO" id="GO:0042128">
    <property type="term" value="P:nitrate assimilation"/>
    <property type="evidence" value="ECO:0007669"/>
    <property type="project" value="UniProtKB-UniRule"/>
</dbReference>
<dbReference type="CDD" id="cd02791">
    <property type="entry name" value="MopB_CT_Nitrate-R-NapA-like"/>
    <property type="match status" value="1"/>
</dbReference>
<dbReference type="CDD" id="cd02754">
    <property type="entry name" value="MopB_Nitrate-R-NapA-like"/>
    <property type="match status" value="1"/>
</dbReference>
<dbReference type="FunFam" id="2.40.40.20:FF:000005">
    <property type="entry name" value="Periplasmic nitrate reductase"/>
    <property type="match status" value="1"/>
</dbReference>
<dbReference type="Gene3D" id="2.40.40.20">
    <property type="match status" value="1"/>
</dbReference>
<dbReference type="Gene3D" id="3.30.200.210">
    <property type="match status" value="1"/>
</dbReference>
<dbReference type="Gene3D" id="3.40.50.740">
    <property type="match status" value="1"/>
</dbReference>
<dbReference type="Gene3D" id="3.40.228.10">
    <property type="entry name" value="Dimethylsulfoxide Reductase, domain 2"/>
    <property type="match status" value="1"/>
</dbReference>
<dbReference type="HAMAP" id="MF_01630">
    <property type="entry name" value="Nitrate_reduct_NapA"/>
    <property type="match status" value="1"/>
</dbReference>
<dbReference type="InterPro" id="IPR009010">
    <property type="entry name" value="Asp_de-COase-like_dom_sf"/>
</dbReference>
<dbReference type="InterPro" id="IPR041957">
    <property type="entry name" value="CT_Nitrate-R-NapA-like"/>
</dbReference>
<dbReference type="InterPro" id="IPR006657">
    <property type="entry name" value="MoPterin_dinucl-bd_dom"/>
</dbReference>
<dbReference type="InterPro" id="IPR006656">
    <property type="entry name" value="Mopterin_OxRdtase"/>
</dbReference>
<dbReference type="InterPro" id="IPR006963">
    <property type="entry name" value="Mopterin_OxRdtase_4Fe-4S_dom"/>
</dbReference>
<dbReference type="InterPro" id="IPR027467">
    <property type="entry name" value="MopterinOxRdtase_cofactor_BS"/>
</dbReference>
<dbReference type="InterPro" id="IPR010051">
    <property type="entry name" value="Periplasm_NO3_reductase_lsu"/>
</dbReference>
<dbReference type="InterPro" id="IPR050123">
    <property type="entry name" value="Prok_molybdopt-oxidoreductase"/>
</dbReference>
<dbReference type="InterPro" id="IPR006311">
    <property type="entry name" value="TAT_signal"/>
</dbReference>
<dbReference type="NCBIfam" id="TIGR01706">
    <property type="entry name" value="NAPA"/>
    <property type="match status" value="1"/>
</dbReference>
<dbReference type="NCBIfam" id="NF010055">
    <property type="entry name" value="PRK13532.1"/>
    <property type="match status" value="1"/>
</dbReference>
<dbReference type="PANTHER" id="PTHR43105:SF11">
    <property type="entry name" value="PERIPLASMIC NITRATE REDUCTASE"/>
    <property type="match status" value="1"/>
</dbReference>
<dbReference type="PANTHER" id="PTHR43105">
    <property type="entry name" value="RESPIRATORY NITRATE REDUCTASE"/>
    <property type="match status" value="1"/>
</dbReference>
<dbReference type="Pfam" id="PF04879">
    <property type="entry name" value="Molybdop_Fe4S4"/>
    <property type="match status" value="1"/>
</dbReference>
<dbReference type="Pfam" id="PF00384">
    <property type="entry name" value="Molybdopterin"/>
    <property type="match status" value="1"/>
</dbReference>
<dbReference type="Pfam" id="PF01568">
    <property type="entry name" value="Molydop_binding"/>
    <property type="match status" value="1"/>
</dbReference>
<dbReference type="SMART" id="SM00926">
    <property type="entry name" value="Molybdop_Fe4S4"/>
    <property type="match status" value="1"/>
</dbReference>
<dbReference type="SUPFAM" id="SSF50692">
    <property type="entry name" value="ADC-like"/>
    <property type="match status" value="1"/>
</dbReference>
<dbReference type="SUPFAM" id="SSF53706">
    <property type="entry name" value="Formate dehydrogenase/DMSO reductase, domains 1-3"/>
    <property type="match status" value="1"/>
</dbReference>
<dbReference type="PROSITE" id="PS51669">
    <property type="entry name" value="4FE4S_MOW_BIS_MGD"/>
    <property type="match status" value="1"/>
</dbReference>
<dbReference type="PROSITE" id="PS00551">
    <property type="entry name" value="MOLYBDOPTERIN_PROK_1"/>
    <property type="match status" value="1"/>
</dbReference>
<dbReference type="PROSITE" id="PS51318">
    <property type="entry name" value="TAT"/>
    <property type="match status" value="1"/>
</dbReference>
<sequence length="838" mass="94211">MKVSRRAFIKQTAAAATASVAGVTLPAGAANLVTDKELTQLKWSKAPCRFCGTGCGVEVAVKDNRVVATQGDPKAEVNRGLNCVKGYFLSKIMYGKDRLTQPLLRMKNGKYDKNGEFTPVTWDRAFDEMAMQFKRVIKEKGPTAVGMFGSGQWTVFEGYAAVKLMKAGFRSNNLDPNARHCMASAVAGFMRTFGMDEPMGCYDDFEVADAFVLWGSNMAEMHPILWSRVTDRRLSAPKTKVAVLSTFTHRSFDLADIPIVFTPQADLAMLNYIANYIITNKKVNTDFVNKHTVFKQGVTDIGYGLRPDNPVQKAAKNADKVGDSKPISFDEFAKFVSTYDLDYTTKLANPDKSKEKEFKQQLQKLAELYADPKIKVVSFWTMGFNQHTRGTWANNMIYNLHLLTGKIATPGNSPFSLTGQPSACGTAREVGTFSHRLPADMVVTNPKHREEAEHIWKLPAGTIPEKPGYHAVLQNRMLKDGKLNAYWVQVNNNMQAGANINEEGYPGYRNPANFIVVSDVYPTVTALAADLILPSAMWVEKEGAYGNAERRTQFWHQLVDAPGEARSDLWQLVEFSKRFKVEEVWPEDLIAKKPELRGKTLYDVLYRNGNVDRFPLKDVDPEYNNAEAKAFGFYLQKGLFEEYASFGRGHGHDLAPFDDYHKARGLRWPVVNGKETRWRYKEGSDPYVKAGTGYQFYGNPDGKAVIFALPYEAPPEVPDKEYPFWLSTGRVLEHWHSGSMTRRVPELYRAFPNAVCFMHPEDANALGLRRGVEVEVISRRGKMRTRIETRGRNQPPKGLVFVPWFDASQLINKVTLDATCPISLQTDFKKCAVKIVKV</sequence>
<gene>
    <name evidence="1" type="primary">napA</name>
    <name type="ordered locus">Rpic_2844</name>
</gene>
<keyword id="KW-0004">4Fe-4S</keyword>
<keyword id="KW-0249">Electron transport</keyword>
<keyword id="KW-0408">Iron</keyword>
<keyword id="KW-0411">Iron-sulfur</keyword>
<keyword id="KW-0479">Metal-binding</keyword>
<keyword id="KW-0500">Molybdenum</keyword>
<keyword id="KW-0534">Nitrate assimilation</keyword>
<keyword id="KW-0560">Oxidoreductase</keyword>
<keyword id="KW-0574">Periplasm</keyword>
<keyword id="KW-0732">Signal</keyword>
<keyword id="KW-0813">Transport</keyword>
<name>NAPA_RALPJ</name>
<organism>
    <name type="scientific">Ralstonia pickettii (strain 12J)</name>
    <dbReference type="NCBI Taxonomy" id="402626"/>
    <lineage>
        <taxon>Bacteria</taxon>
        <taxon>Pseudomonadati</taxon>
        <taxon>Pseudomonadota</taxon>
        <taxon>Betaproteobacteria</taxon>
        <taxon>Burkholderiales</taxon>
        <taxon>Burkholderiaceae</taxon>
        <taxon>Ralstonia</taxon>
    </lineage>
</organism>
<feature type="signal peptide" description="Tat-type signal" evidence="1">
    <location>
        <begin position="1"/>
        <end position="29"/>
    </location>
</feature>
<feature type="chain" id="PRO_5000369510" description="Periplasmic nitrate reductase" evidence="1">
    <location>
        <begin position="30"/>
        <end position="838"/>
    </location>
</feature>
<feature type="domain" description="4Fe-4S Mo/W bis-MGD-type" evidence="1">
    <location>
        <begin position="41"/>
        <end position="97"/>
    </location>
</feature>
<feature type="binding site" evidence="1">
    <location>
        <position position="48"/>
    </location>
    <ligand>
        <name>[4Fe-4S] cluster</name>
        <dbReference type="ChEBI" id="CHEBI:49883"/>
    </ligand>
</feature>
<feature type="binding site" evidence="1">
    <location>
        <position position="51"/>
    </location>
    <ligand>
        <name>[4Fe-4S] cluster</name>
        <dbReference type="ChEBI" id="CHEBI:49883"/>
    </ligand>
</feature>
<feature type="binding site" evidence="1">
    <location>
        <position position="55"/>
    </location>
    <ligand>
        <name>[4Fe-4S] cluster</name>
        <dbReference type="ChEBI" id="CHEBI:49883"/>
    </ligand>
</feature>
<feature type="binding site" evidence="1">
    <location>
        <position position="83"/>
    </location>
    <ligand>
        <name>[4Fe-4S] cluster</name>
        <dbReference type="ChEBI" id="CHEBI:49883"/>
    </ligand>
</feature>
<feature type="binding site" evidence="1">
    <location>
        <position position="85"/>
    </location>
    <ligand>
        <name>Mo-bis(molybdopterin guanine dinucleotide)</name>
        <dbReference type="ChEBI" id="CHEBI:60539"/>
    </ligand>
</feature>
<feature type="binding site" evidence="1">
    <location>
        <position position="152"/>
    </location>
    <ligand>
        <name>Mo-bis(molybdopterin guanine dinucleotide)</name>
        <dbReference type="ChEBI" id="CHEBI:60539"/>
    </ligand>
</feature>
<feature type="binding site" evidence="1">
    <location>
        <position position="177"/>
    </location>
    <ligand>
        <name>Mo-bis(molybdopterin guanine dinucleotide)</name>
        <dbReference type="ChEBI" id="CHEBI:60539"/>
    </ligand>
</feature>
<feature type="binding site" evidence="1">
    <location>
        <position position="181"/>
    </location>
    <ligand>
        <name>Mo-bis(molybdopterin guanine dinucleotide)</name>
        <dbReference type="ChEBI" id="CHEBI:60539"/>
    </ligand>
</feature>
<feature type="binding site" evidence="1">
    <location>
        <begin position="214"/>
        <end position="221"/>
    </location>
    <ligand>
        <name>Mo-bis(molybdopterin guanine dinucleotide)</name>
        <dbReference type="ChEBI" id="CHEBI:60539"/>
    </ligand>
</feature>
<feature type="binding site" evidence="1">
    <location>
        <begin position="245"/>
        <end position="249"/>
    </location>
    <ligand>
        <name>Mo-bis(molybdopterin guanine dinucleotide)</name>
        <dbReference type="ChEBI" id="CHEBI:60539"/>
    </ligand>
</feature>
<feature type="binding site" evidence="1">
    <location>
        <position position="382"/>
    </location>
    <ligand>
        <name>Mo-bis(molybdopterin guanine dinucleotide)</name>
        <dbReference type="ChEBI" id="CHEBI:60539"/>
    </ligand>
</feature>
<feature type="binding site" evidence="1">
    <location>
        <position position="386"/>
    </location>
    <ligand>
        <name>Mo-bis(molybdopterin guanine dinucleotide)</name>
        <dbReference type="ChEBI" id="CHEBI:60539"/>
    </ligand>
</feature>
<feature type="binding site" evidence="1">
    <location>
        <position position="492"/>
    </location>
    <ligand>
        <name>Mo-bis(molybdopterin guanine dinucleotide)</name>
        <dbReference type="ChEBI" id="CHEBI:60539"/>
    </ligand>
</feature>
<feature type="binding site" evidence="1">
    <location>
        <begin position="518"/>
        <end position="519"/>
    </location>
    <ligand>
        <name>Mo-bis(molybdopterin guanine dinucleotide)</name>
        <dbReference type="ChEBI" id="CHEBI:60539"/>
    </ligand>
</feature>
<feature type="binding site" evidence="1">
    <location>
        <position position="541"/>
    </location>
    <ligand>
        <name>Mo-bis(molybdopterin guanine dinucleotide)</name>
        <dbReference type="ChEBI" id="CHEBI:60539"/>
    </ligand>
</feature>
<feature type="binding site" evidence="1">
    <location>
        <position position="568"/>
    </location>
    <ligand>
        <name>Mo-bis(molybdopterin guanine dinucleotide)</name>
        <dbReference type="ChEBI" id="CHEBI:60539"/>
    </ligand>
</feature>
<feature type="binding site" evidence="1">
    <location>
        <begin position="728"/>
        <end position="737"/>
    </location>
    <ligand>
        <name>Mo-bis(molybdopterin guanine dinucleotide)</name>
        <dbReference type="ChEBI" id="CHEBI:60539"/>
    </ligand>
</feature>
<feature type="binding site" evidence="1">
    <location>
        <position position="804"/>
    </location>
    <ligand>
        <name>substrate</name>
    </ligand>
</feature>
<feature type="binding site" evidence="1">
    <location>
        <position position="812"/>
    </location>
    <ligand>
        <name>Mo-bis(molybdopterin guanine dinucleotide)</name>
        <dbReference type="ChEBI" id="CHEBI:60539"/>
    </ligand>
</feature>
<feature type="binding site" evidence="1">
    <location>
        <position position="829"/>
    </location>
    <ligand>
        <name>Mo-bis(molybdopterin guanine dinucleotide)</name>
        <dbReference type="ChEBI" id="CHEBI:60539"/>
    </ligand>
</feature>
<accession>B2UBL7</accession>
<proteinExistence type="inferred from homology"/>
<evidence type="ECO:0000255" key="1">
    <source>
        <dbReference type="HAMAP-Rule" id="MF_01630"/>
    </source>
</evidence>
<comment type="function">
    <text evidence="1">Catalytic subunit of the periplasmic nitrate reductase complex NapAB. Receives electrons from NapB and catalyzes the reduction of nitrate to nitrite.</text>
</comment>
<comment type="catalytic activity">
    <reaction evidence="1">
        <text>2 Fe(II)-[cytochrome] + nitrate + 2 H(+) = 2 Fe(III)-[cytochrome] + nitrite + H2O</text>
        <dbReference type="Rhea" id="RHEA:12909"/>
        <dbReference type="Rhea" id="RHEA-COMP:11777"/>
        <dbReference type="Rhea" id="RHEA-COMP:11778"/>
        <dbReference type="ChEBI" id="CHEBI:15377"/>
        <dbReference type="ChEBI" id="CHEBI:15378"/>
        <dbReference type="ChEBI" id="CHEBI:16301"/>
        <dbReference type="ChEBI" id="CHEBI:17632"/>
        <dbReference type="ChEBI" id="CHEBI:29033"/>
        <dbReference type="ChEBI" id="CHEBI:29034"/>
        <dbReference type="EC" id="1.9.6.1"/>
    </reaction>
</comment>
<comment type="cofactor">
    <cofactor evidence="1">
        <name>[4Fe-4S] cluster</name>
        <dbReference type="ChEBI" id="CHEBI:49883"/>
    </cofactor>
    <text evidence="1">Binds 1 [4Fe-4S] cluster.</text>
</comment>
<comment type="cofactor">
    <cofactor evidence="1">
        <name>Mo-bis(molybdopterin guanine dinucleotide)</name>
        <dbReference type="ChEBI" id="CHEBI:60539"/>
    </cofactor>
    <text evidence="1">Binds 1 molybdenum-bis(molybdopterin guanine dinucleotide) (Mo-bis-MGD) cofactor per subunit.</text>
</comment>
<comment type="subunit">
    <text evidence="1">Component of the periplasmic nitrate reductase NapAB complex composed of NapA and NapB.</text>
</comment>
<comment type="subcellular location">
    <subcellularLocation>
        <location evidence="1">Periplasm</location>
    </subcellularLocation>
</comment>
<comment type="PTM">
    <text evidence="1">Predicted to be exported by the Tat system. The position of the signal peptide cleavage has not been experimentally proven.</text>
</comment>
<comment type="similarity">
    <text evidence="1">Belongs to the prokaryotic molybdopterin-containing oxidoreductase family. NasA/NapA/NarB subfamily.</text>
</comment>
<protein>
    <recommendedName>
        <fullName evidence="1">Periplasmic nitrate reductase</fullName>
        <ecNumber evidence="1">1.9.6.1</ecNumber>
    </recommendedName>
</protein>